<dbReference type="EMBL" id="AE005674">
    <property type="protein sequence ID" value="AAN43011.1"/>
    <property type="molecule type" value="Genomic_DNA"/>
</dbReference>
<dbReference type="EMBL" id="AE014073">
    <property type="protein sequence ID" value="AAP16906.1"/>
    <property type="molecule type" value="Genomic_DNA"/>
</dbReference>
<dbReference type="RefSeq" id="NP_707304.1">
    <property type="nucleotide sequence ID" value="NC_004337.2"/>
</dbReference>
<dbReference type="RefSeq" id="WP_000406926.1">
    <property type="nucleotide sequence ID" value="NZ_WPGW01000062.1"/>
</dbReference>
<dbReference type="SMR" id="P69804"/>
<dbReference type="STRING" id="198214.SF1410"/>
<dbReference type="PaxDb" id="198214-SF1410"/>
<dbReference type="GeneID" id="1024603"/>
<dbReference type="GeneID" id="93776067"/>
<dbReference type="KEGG" id="sfl:SF1410"/>
<dbReference type="KEGG" id="sfx:S1525"/>
<dbReference type="PATRIC" id="fig|198214.7.peg.1662"/>
<dbReference type="HOGENOM" id="CLU_069101_0_0_6"/>
<dbReference type="Proteomes" id="UP000001006">
    <property type="component" value="Chromosome"/>
</dbReference>
<dbReference type="Proteomes" id="UP000002673">
    <property type="component" value="Chromosome"/>
</dbReference>
<dbReference type="GO" id="GO:0005886">
    <property type="term" value="C:plasma membrane"/>
    <property type="evidence" value="ECO:0007669"/>
    <property type="project" value="UniProtKB-SubCell"/>
</dbReference>
<dbReference type="GO" id="GO:0009401">
    <property type="term" value="P:phosphoenolpyruvate-dependent sugar phosphotransferase system"/>
    <property type="evidence" value="ECO:0007669"/>
    <property type="project" value="UniProtKB-KW"/>
</dbReference>
<dbReference type="InterPro" id="IPR050303">
    <property type="entry name" value="GatZ_KbaZ_carbometab"/>
</dbReference>
<dbReference type="InterPro" id="IPR004700">
    <property type="entry name" value="PTS_IIC_man"/>
</dbReference>
<dbReference type="NCBIfam" id="TIGR00822">
    <property type="entry name" value="EII-Sor"/>
    <property type="match status" value="1"/>
</dbReference>
<dbReference type="NCBIfam" id="NF011647">
    <property type="entry name" value="PRK15065.1"/>
    <property type="match status" value="1"/>
</dbReference>
<dbReference type="PANTHER" id="PTHR32502">
    <property type="entry name" value="N-ACETYLGALACTOSAMINE PERMEASE II COMPONENT-RELATED"/>
    <property type="match status" value="1"/>
</dbReference>
<dbReference type="PANTHER" id="PTHR32502:SF4">
    <property type="entry name" value="PTS SYSTEM MANNOSE-SPECIFIC EIIC COMPONENT"/>
    <property type="match status" value="1"/>
</dbReference>
<dbReference type="Pfam" id="PF03609">
    <property type="entry name" value="EII-Sor"/>
    <property type="match status" value="1"/>
</dbReference>
<dbReference type="PROSITE" id="PS51106">
    <property type="entry name" value="PTS_EIIC_TYPE_4"/>
    <property type="match status" value="1"/>
</dbReference>
<organism>
    <name type="scientific">Shigella flexneri</name>
    <dbReference type="NCBI Taxonomy" id="623"/>
    <lineage>
        <taxon>Bacteria</taxon>
        <taxon>Pseudomonadati</taxon>
        <taxon>Pseudomonadota</taxon>
        <taxon>Gammaproteobacteria</taxon>
        <taxon>Enterobacterales</taxon>
        <taxon>Enterobacteriaceae</taxon>
        <taxon>Shigella</taxon>
    </lineage>
</organism>
<feature type="chain" id="PRO_0000186649" description="PTS system mannose-specific EIIC component">
    <location>
        <begin position="1"/>
        <end position="266"/>
    </location>
</feature>
<feature type="topological domain" description="Periplasmic" evidence="1">
    <location>
        <begin position="1"/>
        <end position="4"/>
    </location>
</feature>
<feature type="intramembrane region" evidence="1">
    <location>
        <begin position="5"/>
        <end position="43"/>
    </location>
</feature>
<feature type="topological domain" description="Periplasmic" evidence="1">
    <location>
        <begin position="44"/>
        <end position="46"/>
    </location>
</feature>
<feature type="intramembrane region" evidence="1">
    <location>
        <begin position="47"/>
        <end position="86"/>
    </location>
</feature>
<feature type="topological domain" description="Periplasmic" evidence="1">
    <location>
        <begin position="87"/>
        <end position="90"/>
    </location>
</feature>
<feature type="transmembrane region" evidence="1">
    <location>
        <begin position="91"/>
        <end position="124"/>
    </location>
</feature>
<feature type="topological domain" description="Cytoplasmic" evidence="1">
    <location>
        <begin position="125"/>
        <end position="132"/>
    </location>
</feature>
<feature type="transmembrane region" evidence="1">
    <location>
        <begin position="133"/>
        <end position="160"/>
    </location>
</feature>
<feature type="topological domain" description="Periplasmic" evidence="1">
    <location>
        <begin position="161"/>
        <end position="176"/>
    </location>
</feature>
<feature type="transmembrane region" evidence="1">
    <location>
        <begin position="177"/>
        <end position="200"/>
    </location>
</feature>
<feature type="topological domain" description="Cytoplasmic" evidence="1">
    <location>
        <begin position="201"/>
        <end position="207"/>
    </location>
</feature>
<feature type="transmembrane region" evidence="1">
    <location>
        <begin position="208"/>
        <end position="218"/>
    </location>
</feature>
<feature type="topological domain" description="Periplasmic" evidence="1">
    <location>
        <begin position="219"/>
        <end position="224"/>
    </location>
</feature>
<feature type="transmembrane region" evidence="1">
    <location>
        <begin position="225"/>
        <end position="242"/>
    </location>
</feature>
<feature type="topological domain" description="Cytoplasmic" evidence="1">
    <location>
        <begin position="243"/>
        <end position="266"/>
    </location>
</feature>
<feature type="domain" description="PTS EIIC type-4" evidence="2">
    <location>
        <begin position="1"/>
        <end position="237"/>
    </location>
</feature>
<feature type="modified residue" description="N-formylmethionine" evidence="1">
    <location>
        <position position="1"/>
    </location>
</feature>
<protein>
    <recommendedName>
        <fullName evidence="1">PTS system mannose-specific EIIC component</fullName>
    </recommendedName>
    <alternativeName>
        <fullName evidence="1">EII-P-Man</fullName>
    </alternativeName>
    <alternativeName>
        <fullName evidence="1">EIIC-Man</fullName>
    </alternativeName>
    <alternativeName>
        <fullName evidence="1">Mannose permease IIC component</fullName>
    </alternativeName>
</protein>
<reference key="1">
    <citation type="journal article" date="2002" name="Nucleic Acids Res.">
        <title>Genome sequence of Shigella flexneri 2a: insights into pathogenicity through comparison with genomes of Escherichia coli K12 and O157.</title>
        <authorList>
            <person name="Jin Q."/>
            <person name="Yuan Z."/>
            <person name="Xu J."/>
            <person name="Wang Y."/>
            <person name="Shen Y."/>
            <person name="Lu W."/>
            <person name="Wang J."/>
            <person name="Liu H."/>
            <person name="Yang J."/>
            <person name="Yang F."/>
            <person name="Zhang X."/>
            <person name="Zhang J."/>
            <person name="Yang G."/>
            <person name="Wu H."/>
            <person name="Qu D."/>
            <person name="Dong J."/>
            <person name="Sun L."/>
            <person name="Xue Y."/>
            <person name="Zhao A."/>
            <person name="Gao Y."/>
            <person name="Zhu J."/>
            <person name="Kan B."/>
            <person name="Ding K."/>
            <person name="Chen S."/>
            <person name="Cheng H."/>
            <person name="Yao Z."/>
            <person name="He B."/>
            <person name="Chen R."/>
            <person name="Ma D."/>
            <person name="Qiang B."/>
            <person name="Wen Y."/>
            <person name="Hou Y."/>
            <person name="Yu J."/>
        </authorList>
    </citation>
    <scope>NUCLEOTIDE SEQUENCE [LARGE SCALE GENOMIC DNA]</scope>
    <source>
        <strain>301 / Serotype 2a</strain>
    </source>
</reference>
<reference key="2">
    <citation type="journal article" date="2003" name="Infect. Immun.">
        <title>Complete genome sequence and comparative genomics of Shigella flexneri serotype 2a strain 2457T.</title>
        <authorList>
            <person name="Wei J."/>
            <person name="Goldberg M.B."/>
            <person name="Burland V."/>
            <person name="Venkatesan M.M."/>
            <person name="Deng W."/>
            <person name="Fournier G."/>
            <person name="Mayhew G.F."/>
            <person name="Plunkett G. III"/>
            <person name="Rose D.J."/>
            <person name="Darling A."/>
            <person name="Mau B."/>
            <person name="Perna N.T."/>
            <person name="Payne S.M."/>
            <person name="Runyen-Janecky L.J."/>
            <person name="Zhou S."/>
            <person name="Schwartz D.C."/>
            <person name="Blattner F.R."/>
        </authorList>
    </citation>
    <scope>NUCLEOTIDE SEQUENCE [LARGE SCALE GENOMIC DNA]</scope>
    <source>
        <strain>ATCC 700930 / 2457T / Serotype 2a</strain>
    </source>
</reference>
<sequence length="266" mass="27636">MEITTLQIVLVFIVACIAGMGSILDEFQFHRPLIACTLVGIVLGDMKTGIIIGGTLEMIALGWMNIGAAVAPDAALASIISTILVIAGHQSIGAGIALAIPLAAAGQVLTIIVRTITVAFQHAADKAADNGNLTAISWIHVSSLFLQAMRVAIPAVIVALSVGTSEVQNMLNAIPEVVTNGLNIAGGMIVVVGYAMVINMMRAGYLMPFFYLGFVTAAFTNFNLVALGVIGTVMAVLYIQLSPKYNRVAGAPAQAAGNNDLDNELD</sequence>
<keyword id="KW-0997">Cell inner membrane</keyword>
<keyword id="KW-1003">Cell membrane</keyword>
<keyword id="KW-0291">Formylation</keyword>
<keyword id="KW-0472">Membrane</keyword>
<keyword id="KW-0598">Phosphotransferase system</keyword>
<keyword id="KW-1185">Reference proteome</keyword>
<keyword id="KW-0762">Sugar transport</keyword>
<keyword id="KW-0812">Transmembrane</keyword>
<keyword id="KW-1133">Transmembrane helix</keyword>
<keyword id="KW-0813">Transport</keyword>
<evidence type="ECO:0000250" key="1">
    <source>
        <dbReference type="UniProtKB" id="P69801"/>
    </source>
</evidence>
<evidence type="ECO:0000255" key="2">
    <source>
        <dbReference type="PROSITE-ProRule" id="PRU00429"/>
    </source>
</evidence>
<proteinExistence type="inferred from homology"/>
<comment type="function">
    <text evidence="1">The phosphoenolpyruvate-dependent sugar phosphotransferase system (sugar PTS), a major carbohydrate active transport system, catalyzes the phosphorylation of incoming sugar substrates concomitantly with their translocation across the cell membrane. The enzyme II ManXYZ PTS system is involved in mannose transport.</text>
</comment>
<comment type="subunit">
    <text evidence="1">Homotrimer of protomers that are composed of two subunits, IIC and IID.</text>
</comment>
<comment type="subcellular location">
    <subcellularLocation>
        <location evidence="2">Cell inner membrane</location>
        <topology evidence="2">Multi-pass membrane protein</topology>
    </subcellularLocation>
</comment>
<comment type="domain">
    <text evidence="2">The PTS EIIC type-4 domain forms the PTS system translocation channel and contains the specific substrate-binding site.</text>
</comment>
<gene>
    <name type="primary">manY</name>
    <name type="ordered locus">SF1410</name>
    <name type="ordered locus">S1525</name>
</gene>
<accession>P69804</accession>
<accession>P08187</accession>
<accession>Q47351</accession>
<name>PTNC_SHIFL</name>